<sequence>MRWPPWASESQAQQHNTKPPIEHNEKEHGSKSKSWESSVTAIDWAAFAEPRTIIPTVILTSGFLGAFHIHRRYLRRFPDAGSITPSHFRRRSLLGRVTSVGDGDNFRLYHTPGGRLAGWGWLPWKKVPTSKKELRDKTVHIRLAGVDAPELAHFGRPEQPFAREAHQWLTSYLLNRRVRAYIHRPDQYQRAVATVYVRRALDFPIPFRRRDVSYEMLKQGLATVYEAKWGAEFGGEAMERKYRKAEWWAKLRGTGLWKDFRRNEKEWESPRAYKTRMGLEEAVQPRVESKK</sequence>
<dbReference type="EC" id="3.1.-.-"/>
<dbReference type="EMBL" id="DS027059">
    <property type="protein sequence ID" value="EAW08385.1"/>
    <property type="molecule type" value="Genomic_DNA"/>
</dbReference>
<dbReference type="RefSeq" id="XP_001269811.1">
    <property type="nucleotide sequence ID" value="XM_001269810.1"/>
</dbReference>
<dbReference type="STRING" id="344612.A1CRW4"/>
<dbReference type="EnsemblFungi" id="EAW08385">
    <property type="protein sequence ID" value="EAW08385"/>
    <property type="gene ID" value="ACLA_031180"/>
</dbReference>
<dbReference type="GeneID" id="4700592"/>
<dbReference type="KEGG" id="act:ACLA_031180"/>
<dbReference type="VEuPathDB" id="FungiDB:ACLA_031180"/>
<dbReference type="eggNOG" id="ENOG502S1U4">
    <property type="taxonomic scope" value="Eukaryota"/>
</dbReference>
<dbReference type="HOGENOM" id="CLU_046484_0_1_1"/>
<dbReference type="OMA" id="IYHTPGG"/>
<dbReference type="OrthoDB" id="430293at2759"/>
<dbReference type="Proteomes" id="UP000006701">
    <property type="component" value="Unassembled WGS sequence"/>
</dbReference>
<dbReference type="GO" id="GO:0016020">
    <property type="term" value="C:membrane"/>
    <property type="evidence" value="ECO:0007669"/>
    <property type="project" value="UniProtKB-SubCell"/>
</dbReference>
<dbReference type="GO" id="GO:0005739">
    <property type="term" value="C:mitochondrion"/>
    <property type="evidence" value="ECO:0007669"/>
    <property type="project" value="UniProtKB-SubCell"/>
</dbReference>
<dbReference type="GO" id="GO:0004519">
    <property type="term" value="F:endonuclease activity"/>
    <property type="evidence" value="ECO:0007669"/>
    <property type="project" value="UniProtKB-KW"/>
</dbReference>
<dbReference type="GO" id="GO:0046872">
    <property type="term" value="F:metal ion binding"/>
    <property type="evidence" value="ECO:0007669"/>
    <property type="project" value="UniProtKB-KW"/>
</dbReference>
<dbReference type="FunFam" id="2.40.50.90:FF:000029">
    <property type="entry name" value="Probable endonuclease lcl3"/>
    <property type="match status" value="1"/>
</dbReference>
<dbReference type="Gene3D" id="2.40.50.90">
    <property type="match status" value="1"/>
</dbReference>
<dbReference type="InterPro" id="IPR035437">
    <property type="entry name" value="SNase_OB-fold_sf"/>
</dbReference>
<dbReference type="InterPro" id="IPR016071">
    <property type="entry name" value="Staphylococal_nuclease_OB-fold"/>
</dbReference>
<dbReference type="PANTHER" id="PTHR12302">
    <property type="entry name" value="EBNA2 BINDING PROTEIN P100"/>
    <property type="match status" value="1"/>
</dbReference>
<dbReference type="PANTHER" id="PTHR12302:SF3">
    <property type="entry name" value="SERINE_THREONINE-PROTEIN KINASE 31"/>
    <property type="match status" value="1"/>
</dbReference>
<dbReference type="Pfam" id="PF00565">
    <property type="entry name" value="SNase"/>
    <property type="match status" value="1"/>
</dbReference>
<dbReference type="SMART" id="SM00318">
    <property type="entry name" value="SNc"/>
    <property type="match status" value="1"/>
</dbReference>
<dbReference type="SUPFAM" id="SSF50199">
    <property type="entry name" value="Staphylococcal nuclease"/>
    <property type="match status" value="1"/>
</dbReference>
<dbReference type="PROSITE" id="PS50830">
    <property type="entry name" value="TNASE_3"/>
    <property type="match status" value="1"/>
</dbReference>
<accession>A1CRW4</accession>
<protein>
    <recommendedName>
        <fullName>Probable endonuclease lcl3</fullName>
        <ecNumber>3.1.-.-</ecNumber>
    </recommendedName>
</protein>
<comment type="subcellular location">
    <subcellularLocation>
        <location>Mitochondrion</location>
    </subcellularLocation>
    <subcellularLocation>
        <location evidence="1">Membrane</location>
        <topology evidence="1">Single-pass membrane protein</topology>
    </subcellularLocation>
</comment>
<comment type="similarity">
    <text evidence="5">Belongs to the LCL3 family.</text>
</comment>
<gene>
    <name type="primary">lcl3</name>
    <name type="ORF">ACLA_031180</name>
</gene>
<reference key="1">
    <citation type="journal article" date="2008" name="PLoS Genet.">
        <title>Genomic islands in the pathogenic filamentous fungus Aspergillus fumigatus.</title>
        <authorList>
            <person name="Fedorova N.D."/>
            <person name="Khaldi N."/>
            <person name="Joardar V.S."/>
            <person name="Maiti R."/>
            <person name="Amedeo P."/>
            <person name="Anderson M.J."/>
            <person name="Crabtree J."/>
            <person name="Silva J.C."/>
            <person name="Badger J.H."/>
            <person name="Albarraq A."/>
            <person name="Angiuoli S."/>
            <person name="Bussey H."/>
            <person name="Bowyer P."/>
            <person name="Cotty P.J."/>
            <person name="Dyer P.S."/>
            <person name="Egan A."/>
            <person name="Galens K."/>
            <person name="Fraser-Liggett C.M."/>
            <person name="Haas B.J."/>
            <person name="Inman J.M."/>
            <person name="Kent R."/>
            <person name="Lemieux S."/>
            <person name="Malavazi I."/>
            <person name="Orvis J."/>
            <person name="Roemer T."/>
            <person name="Ronning C.M."/>
            <person name="Sundaram J.P."/>
            <person name="Sutton G."/>
            <person name="Turner G."/>
            <person name="Venter J.C."/>
            <person name="White O.R."/>
            <person name="Whitty B.R."/>
            <person name="Youngman P."/>
            <person name="Wolfe K.H."/>
            <person name="Goldman G.H."/>
            <person name="Wortman J.R."/>
            <person name="Jiang B."/>
            <person name="Denning D.W."/>
            <person name="Nierman W.C."/>
        </authorList>
    </citation>
    <scope>NUCLEOTIDE SEQUENCE [LARGE SCALE GENOMIC DNA]</scope>
    <source>
        <strain>ATCC 1007 / CBS 513.65 / DSM 816 / NCTC 3887 / NRRL 1 / QM 1276 / 107</strain>
    </source>
</reference>
<keyword id="KW-0106">Calcium</keyword>
<keyword id="KW-0255">Endonuclease</keyword>
<keyword id="KW-0378">Hydrolase</keyword>
<keyword id="KW-0472">Membrane</keyword>
<keyword id="KW-0479">Metal-binding</keyword>
<keyword id="KW-0496">Mitochondrion</keyword>
<keyword id="KW-0540">Nuclease</keyword>
<keyword id="KW-1185">Reference proteome</keyword>
<keyword id="KW-0812">Transmembrane</keyword>
<keyword id="KW-1133">Transmembrane helix</keyword>
<organism>
    <name type="scientific">Aspergillus clavatus (strain ATCC 1007 / CBS 513.65 / DSM 816 / NCTC 3887 / NRRL 1 / QM 1276 / 107)</name>
    <dbReference type="NCBI Taxonomy" id="344612"/>
    <lineage>
        <taxon>Eukaryota</taxon>
        <taxon>Fungi</taxon>
        <taxon>Dikarya</taxon>
        <taxon>Ascomycota</taxon>
        <taxon>Pezizomycotina</taxon>
        <taxon>Eurotiomycetes</taxon>
        <taxon>Eurotiomycetidae</taxon>
        <taxon>Eurotiales</taxon>
        <taxon>Aspergillaceae</taxon>
        <taxon>Aspergillus</taxon>
        <taxon>Aspergillus subgen. Fumigati</taxon>
    </lineage>
</organism>
<name>LCL3_ASPCL</name>
<proteinExistence type="inferred from homology"/>
<evidence type="ECO:0000250" key="1"/>
<evidence type="ECO:0000255" key="2"/>
<evidence type="ECO:0000255" key="3">
    <source>
        <dbReference type="PROSITE-ProRule" id="PRU00272"/>
    </source>
</evidence>
<evidence type="ECO:0000256" key="4">
    <source>
        <dbReference type="SAM" id="MobiDB-lite"/>
    </source>
</evidence>
<evidence type="ECO:0000305" key="5"/>
<feature type="chain" id="PRO_0000408642" description="Probable endonuclease lcl3">
    <location>
        <begin position="1"/>
        <end position="291"/>
    </location>
</feature>
<feature type="transmembrane region" description="Helical" evidence="2">
    <location>
        <begin position="53"/>
        <end position="69"/>
    </location>
</feature>
<feature type="domain" description="TNase-like" evidence="3">
    <location>
        <begin position="91"/>
        <end position="259"/>
    </location>
</feature>
<feature type="region of interest" description="Disordered" evidence="4">
    <location>
        <begin position="1"/>
        <end position="34"/>
    </location>
</feature>
<feature type="compositionally biased region" description="Polar residues" evidence="4">
    <location>
        <begin position="8"/>
        <end position="17"/>
    </location>
</feature>
<feature type="compositionally biased region" description="Basic and acidic residues" evidence="4">
    <location>
        <begin position="20"/>
        <end position="34"/>
    </location>
</feature>
<feature type="active site" evidence="3">
    <location>
        <position position="142"/>
    </location>
</feature>
<feature type="active site" evidence="3">
    <location>
        <position position="150"/>
    </location>
</feature>
<feature type="active site" evidence="3">
    <location>
        <position position="190"/>
    </location>
</feature>
<feature type="binding site" evidence="3">
    <location>
        <position position="147"/>
    </location>
    <ligand>
        <name>Ca(2+)</name>
        <dbReference type="ChEBI" id="CHEBI:29108"/>
    </ligand>
</feature>